<feature type="chain" id="PRO_1000004240" description="Oligoribonuclease">
    <location>
        <begin position="1"/>
        <end position="206"/>
    </location>
</feature>
<feature type="domain" description="Exonuclease" evidence="1">
    <location>
        <begin position="20"/>
        <end position="183"/>
    </location>
</feature>
<feature type="active site" evidence="1">
    <location>
        <position position="141"/>
    </location>
</feature>
<gene>
    <name evidence="1" type="primary">orn</name>
    <name type="ordered locus">Bcep18194_A4192</name>
</gene>
<accession>Q39IC7</accession>
<reference key="1">
    <citation type="submission" date="2005-10" db="EMBL/GenBank/DDBJ databases">
        <title>Complete sequence of chromosome 1 of Burkholderia sp. 383.</title>
        <authorList>
            <consortium name="US DOE Joint Genome Institute"/>
            <person name="Copeland A."/>
            <person name="Lucas S."/>
            <person name="Lapidus A."/>
            <person name="Barry K."/>
            <person name="Detter J.C."/>
            <person name="Glavina T."/>
            <person name="Hammon N."/>
            <person name="Israni S."/>
            <person name="Pitluck S."/>
            <person name="Chain P."/>
            <person name="Malfatti S."/>
            <person name="Shin M."/>
            <person name="Vergez L."/>
            <person name="Schmutz J."/>
            <person name="Larimer F."/>
            <person name="Land M."/>
            <person name="Kyrpides N."/>
            <person name="Lykidis A."/>
            <person name="Richardson P."/>
        </authorList>
    </citation>
    <scope>NUCLEOTIDE SEQUENCE [LARGE SCALE GENOMIC DNA]</scope>
    <source>
        <strain>ATCC 17760 / DSM 23089 / LMG 22485 / NCIMB 9086 / R18194 / 383</strain>
    </source>
</reference>
<keyword id="KW-0963">Cytoplasm</keyword>
<keyword id="KW-0269">Exonuclease</keyword>
<keyword id="KW-0378">Hydrolase</keyword>
<keyword id="KW-0540">Nuclease</keyword>
<proteinExistence type="inferred from homology"/>
<dbReference type="EC" id="3.1.15.-" evidence="1"/>
<dbReference type="EMBL" id="CP000151">
    <property type="protein sequence ID" value="ABB07789.1"/>
    <property type="molecule type" value="Genomic_DNA"/>
</dbReference>
<dbReference type="RefSeq" id="WP_011351365.1">
    <property type="nucleotide sequence ID" value="NZ_WNDV01000026.1"/>
</dbReference>
<dbReference type="SMR" id="Q39IC7"/>
<dbReference type="GeneID" id="45094091"/>
<dbReference type="KEGG" id="bur:Bcep18194_A4192"/>
<dbReference type="PATRIC" id="fig|482957.22.peg.1079"/>
<dbReference type="HOGENOM" id="CLU_064761_2_0_4"/>
<dbReference type="Proteomes" id="UP000002705">
    <property type="component" value="Chromosome 1"/>
</dbReference>
<dbReference type="GO" id="GO:0005737">
    <property type="term" value="C:cytoplasm"/>
    <property type="evidence" value="ECO:0007669"/>
    <property type="project" value="UniProtKB-SubCell"/>
</dbReference>
<dbReference type="GO" id="GO:0000175">
    <property type="term" value="F:3'-5'-RNA exonuclease activity"/>
    <property type="evidence" value="ECO:0007669"/>
    <property type="project" value="InterPro"/>
</dbReference>
<dbReference type="GO" id="GO:0003676">
    <property type="term" value="F:nucleic acid binding"/>
    <property type="evidence" value="ECO:0007669"/>
    <property type="project" value="InterPro"/>
</dbReference>
<dbReference type="GO" id="GO:0006259">
    <property type="term" value="P:DNA metabolic process"/>
    <property type="evidence" value="ECO:0007669"/>
    <property type="project" value="UniProtKB-ARBA"/>
</dbReference>
<dbReference type="CDD" id="cd06135">
    <property type="entry name" value="Orn"/>
    <property type="match status" value="1"/>
</dbReference>
<dbReference type="FunFam" id="3.30.420.10:FF:000003">
    <property type="entry name" value="Oligoribonuclease"/>
    <property type="match status" value="1"/>
</dbReference>
<dbReference type="Gene3D" id="3.30.420.10">
    <property type="entry name" value="Ribonuclease H-like superfamily/Ribonuclease H"/>
    <property type="match status" value="1"/>
</dbReference>
<dbReference type="HAMAP" id="MF_00045">
    <property type="entry name" value="Oligoribonuclease"/>
    <property type="match status" value="1"/>
</dbReference>
<dbReference type="InterPro" id="IPR013520">
    <property type="entry name" value="Exonuclease_RNaseT/DNA_pol3"/>
</dbReference>
<dbReference type="InterPro" id="IPR022894">
    <property type="entry name" value="Oligoribonuclease"/>
</dbReference>
<dbReference type="InterPro" id="IPR012337">
    <property type="entry name" value="RNaseH-like_sf"/>
</dbReference>
<dbReference type="InterPro" id="IPR036397">
    <property type="entry name" value="RNaseH_sf"/>
</dbReference>
<dbReference type="NCBIfam" id="NF003765">
    <property type="entry name" value="PRK05359.1"/>
    <property type="match status" value="1"/>
</dbReference>
<dbReference type="PANTHER" id="PTHR11046">
    <property type="entry name" value="OLIGORIBONUCLEASE, MITOCHONDRIAL"/>
    <property type="match status" value="1"/>
</dbReference>
<dbReference type="PANTHER" id="PTHR11046:SF0">
    <property type="entry name" value="OLIGORIBONUCLEASE, MITOCHONDRIAL"/>
    <property type="match status" value="1"/>
</dbReference>
<dbReference type="Pfam" id="PF00929">
    <property type="entry name" value="RNase_T"/>
    <property type="match status" value="1"/>
</dbReference>
<dbReference type="SMART" id="SM00479">
    <property type="entry name" value="EXOIII"/>
    <property type="match status" value="1"/>
</dbReference>
<dbReference type="SUPFAM" id="SSF53098">
    <property type="entry name" value="Ribonuclease H-like"/>
    <property type="match status" value="1"/>
</dbReference>
<organism>
    <name type="scientific">Burkholderia lata (strain ATCC 17760 / DSM 23089 / LMG 22485 / NCIMB 9086 / R18194 / 383)</name>
    <dbReference type="NCBI Taxonomy" id="482957"/>
    <lineage>
        <taxon>Bacteria</taxon>
        <taxon>Pseudomonadati</taxon>
        <taxon>Pseudomonadota</taxon>
        <taxon>Betaproteobacteria</taxon>
        <taxon>Burkholderiales</taxon>
        <taxon>Burkholderiaceae</taxon>
        <taxon>Burkholderia</taxon>
        <taxon>Burkholderia cepacia complex</taxon>
    </lineage>
</organism>
<name>ORN_BURL3</name>
<comment type="function">
    <text evidence="1">3'-to-5' exoribonuclease specific for small oligoribonucleotides.</text>
</comment>
<comment type="subcellular location">
    <subcellularLocation>
        <location evidence="1">Cytoplasm</location>
    </subcellularLocation>
</comment>
<comment type="similarity">
    <text evidence="1">Belongs to the oligoribonuclease family.</text>
</comment>
<protein>
    <recommendedName>
        <fullName evidence="1">Oligoribonuclease</fullName>
        <ecNumber evidence="1">3.1.15.-</ecNumber>
    </recommendedName>
</protein>
<sequence>MTDTAASTSQPALVRNELNLVWLDMEMTGLDPDNDRIIEIAVVVTNSTLDIAVEGPVFAIHQSDETLAKMDDWNKSTHGRSGLIDRVRASTVTEAEAAEQLQAFLAQYVSPGKSPMCGNSICQDRRFMARWMPEFERFFHYRNLDVSTLKELCRRWQPAIYKGFQKRAMHTALADIHESIDELKYYREHFLIPAASASAGESAPAA</sequence>
<evidence type="ECO:0000255" key="1">
    <source>
        <dbReference type="HAMAP-Rule" id="MF_00045"/>
    </source>
</evidence>